<sequence length="225" mass="23820">MTEPRAWFLAGTDTEIGKTFVACALLHAARRDGRSALGMKPVAAGAEWIAGEWLNEDAAQLRAASSFDPGLDRLNPYCLKTPVAPHIAAAEEGVEIDPARIRAAFESLRAQADVVIVEGVGGFRVPLGDRYDTADLARELGLPVILVVGMRLGCISHALLTVEAIAARGLTLAGWIANRIDPAMLRADENLEALRRRIDAPLLGVVPHVAGADPAQVAASLRLPG</sequence>
<protein>
    <recommendedName>
        <fullName evidence="1">ATP-dependent dethiobiotin synthetase BioD</fullName>
        <ecNumber evidence="1">6.3.3.3</ecNumber>
    </recommendedName>
    <alternativeName>
        <fullName evidence="1">DTB synthetase</fullName>
        <shortName evidence="1">DTBS</shortName>
    </alternativeName>
    <alternativeName>
        <fullName evidence="1">Dethiobiotin synthase</fullName>
    </alternativeName>
</protein>
<gene>
    <name evidence="1" type="primary">bioD</name>
    <name type="ordered locus">AZOSEA34310</name>
    <name type="ORF">ebA6011</name>
</gene>
<comment type="function">
    <text evidence="1">Catalyzes a mechanistically unusual reaction, the ATP-dependent insertion of CO2 between the N7 and N8 nitrogen atoms of 7,8-diaminopelargonic acid (DAPA, also called 7,8-diammoniononanoate) to form a ureido ring.</text>
</comment>
<comment type="catalytic activity">
    <reaction evidence="1">
        <text>(7R,8S)-7,8-diammoniononanoate + CO2 + ATP = (4R,5S)-dethiobiotin + ADP + phosphate + 3 H(+)</text>
        <dbReference type="Rhea" id="RHEA:15805"/>
        <dbReference type="ChEBI" id="CHEBI:15378"/>
        <dbReference type="ChEBI" id="CHEBI:16526"/>
        <dbReference type="ChEBI" id="CHEBI:30616"/>
        <dbReference type="ChEBI" id="CHEBI:43474"/>
        <dbReference type="ChEBI" id="CHEBI:149469"/>
        <dbReference type="ChEBI" id="CHEBI:149473"/>
        <dbReference type="ChEBI" id="CHEBI:456216"/>
        <dbReference type="EC" id="6.3.3.3"/>
    </reaction>
</comment>
<comment type="cofactor">
    <cofactor evidence="1">
        <name>Mg(2+)</name>
        <dbReference type="ChEBI" id="CHEBI:18420"/>
    </cofactor>
</comment>
<comment type="pathway">
    <text evidence="1">Cofactor biosynthesis; biotin biosynthesis; biotin from 7,8-diaminononanoate: step 1/2.</text>
</comment>
<comment type="subunit">
    <text evidence="1">Homodimer.</text>
</comment>
<comment type="subcellular location">
    <subcellularLocation>
        <location evidence="1">Cytoplasm</location>
    </subcellularLocation>
</comment>
<comment type="similarity">
    <text evidence="1">Belongs to the dethiobiotin synthetase family.</text>
</comment>
<evidence type="ECO:0000255" key="1">
    <source>
        <dbReference type="HAMAP-Rule" id="MF_00336"/>
    </source>
</evidence>
<proteinExistence type="inferred from homology"/>
<organism>
    <name type="scientific">Aromatoleum aromaticum (strain DSM 19018 / LMG 30748 / EbN1)</name>
    <name type="common">Azoarcus sp. (strain EbN1)</name>
    <dbReference type="NCBI Taxonomy" id="76114"/>
    <lineage>
        <taxon>Bacteria</taxon>
        <taxon>Pseudomonadati</taxon>
        <taxon>Pseudomonadota</taxon>
        <taxon>Betaproteobacteria</taxon>
        <taxon>Rhodocyclales</taxon>
        <taxon>Rhodocyclaceae</taxon>
        <taxon>Aromatoleum</taxon>
    </lineage>
</organism>
<feature type="chain" id="PRO_0000302474" description="ATP-dependent dethiobiotin synthetase BioD">
    <location>
        <begin position="1"/>
        <end position="225"/>
    </location>
</feature>
<feature type="active site" evidence="1">
    <location>
        <position position="40"/>
    </location>
</feature>
<feature type="binding site" evidence="1">
    <location>
        <begin position="15"/>
        <end position="20"/>
    </location>
    <ligand>
        <name>ATP</name>
        <dbReference type="ChEBI" id="CHEBI:30616"/>
    </ligand>
</feature>
<feature type="binding site" evidence="1">
    <location>
        <position position="19"/>
    </location>
    <ligand>
        <name>Mg(2+)</name>
        <dbReference type="ChEBI" id="CHEBI:18420"/>
    </ligand>
</feature>
<feature type="binding site" evidence="1">
    <location>
        <position position="57"/>
    </location>
    <ligand>
        <name>ATP</name>
        <dbReference type="ChEBI" id="CHEBI:30616"/>
    </ligand>
</feature>
<feature type="binding site" evidence="1">
    <location>
        <position position="57"/>
    </location>
    <ligand>
        <name>Mg(2+)</name>
        <dbReference type="ChEBI" id="CHEBI:18420"/>
    </ligand>
</feature>
<feature type="binding site" evidence="1">
    <location>
        <begin position="118"/>
        <end position="121"/>
    </location>
    <ligand>
        <name>ATP</name>
        <dbReference type="ChEBI" id="CHEBI:30616"/>
    </ligand>
</feature>
<feature type="binding site" evidence="1">
    <location>
        <position position="118"/>
    </location>
    <ligand>
        <name>Mg(2+)</name>
        <dbReference type="ChEBI" id="CHEBI:18420"/>
    </ligand>
</feature>
<feature type="binding site" evidence="1">
    <location>
        <begin position="178"/>
        <end position="179"/>
    </location>
    <ligand>
        <name>ATP</name>
        <dbReference type="ChEBI" id="CHEBI:30616"/>
    </ligand>
</feature>
<feature type="binding site" evidence="1">
    <location>
        <begin position="207"/>
        <end position="209"/>
    </location>
    <ligand>
        <name>ATP</name>
        <dbReference type="ChEBI" id="CHEBI:30616"/>
    </ligand>
</feature>
<reference key="1">
    <citation type="journal article" date="2005" name="Arch. Microbiol.">
        <title>The genome sequence of an anaerobic aromatic-degrading denitrifying bacterium, strain EbN1.</title>
        <authorList>
            <person name="Rabus R."/>
            <person name="Kube M."/>
            <person name="Heider J."/>
            <person name="Beck A."/>
            <person name="Heitmann K."/>
            <person name="Widdel F."/>
            <person name="Reinhardt R."/>
        </authorList>
    </citation>
    <scope>NUCLEOTIDE SEQUENCE [LARGE SCALE GENOMIC DNA]</scope>
    <source>
        <strain>DSM 19018 / LMG 30748 / EbN1</strain>
    </source>
</reference>
<dbReference type="EC" id="6.3.3.3" evidence="1"/>
<dbReference type="EMBL" id="CR555306">
    <property type="protein sequence ID" value="CAI09556.1"/>
    <property type="molecule type" value="Genomic_DNA"/>
</dbReference>
<dbReference type="RefSeq" id="WP_011239216.1">
    <property type="nucleotide sequence ID" value="NC_006513.1"/>
</dbReference>
<dbReference type="SMR" id="Q5NZF8"/>
<dbReference type="STRING" id="76114.ebA6011"/>
<dbReference type="KEGG" id="eba:ebA6011"/>
<dbReference type="eggNOG" id="COG0132">
    <property type="taxonomic scope" value="Bacteria"/>
</dbReference>
<dbReference type="HOGENOM" id="CLU_072551_0_0_4"/>
<dbReference type="OrthoDB" id="9802097at2"/>
<dbReference type="UniPathway" id="UPA00078">
    <property type="reaction ID" value="UER00161"/>
</dbReference>
<dbReference type="Proteomes" id="UP000006552">
    <property type="component" value="Chromosome"/>
</dbReference>
<dbReference type="GO" id="GO:0005829">
    <property type="term" value="C:cytosol"/>
    <property type="evidence" value="ECO:0007669"/>
    <property type="project" value="TreeGrafter"/>
</dbReference>
<dbReference type="GO" id="GO:0005524">
    <property type="term" value="F:ATP binding"/>
    <property type="evidence" value="ECO:0007669"/>
    <property type="project" value="UniProtKB-UniRule"/>
</dbReference>
<dbReference type="GO" id="GO:0004141">
    <property type="term" value="F:dethiobiotin synthase activity"/>
    <property type="evidence" value="ECO:0007669"/>
    <property type="project" value="UniProtKB-UniRule"/>
</dbReference>
<dbReference type="GO" id="GO:0000287">
    <property type="term" value="F:magnesium ion binding"/>
    <property type="evidence" value="ECO:0007669"/>
    <property type="project" value="UniProtKB-UniRule"/>
</dbReference>
<dbReference type="GO" id="GO:0009102">
    <property type="term" value="P:biotin biosynthetic process"/>
    <property type="evidence" value="ECO:0007669"/>
    <property type="project" value="UniProtKB-UniRule"/>
</dbReference>
<dbReference type="CDD" id="cd03109">
    <property type="entry name" value="DTBS"/>
    <property type="match status" value="1"/>
</dbReference>
<dbReference type="FunFam" id="3.40.50.300:FF:000292">
    <property type="entry name" value="ATP-dependent dethiobiotin synthetase BioD"/>
    <property type="match status" value="1"/>
</dbReference>
<dbReference type="Gene3D" id="3.40.50.300">
    <property type="entry name" value="P-loop containing nucleotide triphosphate hydrolases"/>
    <property type="match status" value="1"/>
</dbReference>
<dbReference type="HAMAP" id="MF_00336">
    <property type="entry name" value="BioD"/>
    <property type="match status" value="1"/>
</dbReference>
<dbReference type="InterPro" id="IPR004472">
    <property type="entry name" value="DTB_synth_BioD"/>
</dbReference>
<dbReference type="InterPro" id="IPR027417">
    <property type="entry name" value="P-loop_NTPase"/>
</dbReference>
<dbReference type="NCBIfam" id="TIGR00347">
    <property type="entry name" value="bioD"/>
    <property type="match status" value="1"/>
</dbReference>
<dbReference type="PANTHER" id="PTHR43210">
    <property type="entry name" value="DETHIOBIOTIN SYNTHETASE"/>
    <property type="match status" value="1"/>
</dbReference>
<dbReference type="PANTHER" id="PTHR43210:SF5">
    <property type="entry name" value="DETHIOBIOTIN SYNTHETASE"/>
    <property type="match status" value="1"/>
</dbReference>
<dbReference type="Pfam" id="PF13500">
    <property type="entry name" value="AAA_26"/>
    <property type="match status" value="1"/>
</dbReference>
<dbReference type="PIRSF" id="PIRSF006755">
    <property type="entry name" value="DTB_synth"/>
    <property type="match status" value="1"/>
</dbReference>
<dbReference type="SUPFAM" id="SSF52540">
    <property type="entry name" value="P-loop containing nucleoside triphosphate hydrolases"/>
    <property type="match status" value="1"/>
</dbReference>
<accession>Q5NZF8</accession>
<name>BIOD_AROAE</name>
<keyword id="KW-0067">ATP-binding</keyword>
<keyword id="KW-0093">Biotin biosynthesis</keyword>
<keyword id="KW-0963">Cytoplasm</keyword>
<keyword id="KW-0436">Ligase</keyword>
<keyword id="KW-0460">Magnesium</keyword>
<keyword id="KW-0479">Metal-binding</keyword>
<keyword id="KW-0547">Nucleotide-binding</keyword>
<keyword id="KW-1185">Reference proteome</keyword>